<sequence length="226" mass="24487">MSSQTPVVTVDGPSGAGKGTLCMLLAKKLGFQLLDSGAIYRVLALAAIHHGVDTESEDALVPLATHLDVQFIAEGDLVKVILEGEDVSGELRKEETGMAASKVAALPRVREALLRRQRAFEAAPGLVADGRDMGTVVFPSAQAKIFLDASAEERANRRLKQLQDKGLDVRFADLLSEIQERDDRDRNRPVAPLRPAEDALVLDSTSMTIDEVVEKALQYIESKLAE</sequence>
<accession>Q87N44</accession>
<feature type="chain" id="PRO_0000131999" description="Cytidylate kinase">
    <location>
        <begin position="1"/>
        <end position="226"/>
    </location>
</feature>
<feature type="binding site" evidence="1">
    <location>
        <begin position="12"/>
        <end position="20"/>
    </location>
    <ligand>
        <name>ATP</name>
        <dbReference type="ChEBI" id="CHEBI:30616"/>
    </ligand>
</feature>
<protein>
    <recommendedName>
        <fullName evidence="1">Cytidylate kinase</fullName>
        <shortName evidence="1">CK</shortName>
        <ecNumber evidence="1">2.7.4.25</ecNumber>
    </recommendedName>
    <alternativeName>
        <fullName evidence="1">Cytidine monophosphate kinase</fullName>
        <shortName evidence="1">CMP kinase</shortName>
    </alternativeName>
</protein>
<dbReference type="EC" id="2.7.4.25" evidence="1"/>
<dbReference type="EMBL" id="BA000031">
    <property type="protein sequence ID" value="BAC60294.1"/>
    <property type="molecule type" value="Genomic_DNA"/>
</dbReference>
<dbReference type="RefSeq" id="NP_798410.1">
    <property type="nucleotide sequence ID" value="NC_004603.1"/>
</dbReference>
<dbReference type="RefSeq" id="WP_011106010.1">
    <property type="nucleotide sequence ID" value="NC_004603.1"/>
</dbReference>
<dbReference type="SMR" id="Q87N44"/>
<dbReference type="GeneID" id="1189542"/>
<dbReference type="KEGG" id="vpa:VP2031"/>
<dbReference type="PATRIC" id="fig|223926.6.peg.1942"/>
<dbReference type="eggNOG" id="COG0283">
    <property type="taxonomic scope" value="Bacteria"/>
</dbReference>
<dbReference type="HOGENOM" id="CLU_079959_2_0_6"/>
<dbReference type="Proteomes" id="UP000002493">
    <property type="component" value="Chromosome 1"/>
</dbReference>
<dbReference type="GO" id="GO:0005829">
    <property type="term" value="C:cytosol"/>
    <property type="evidence" value="ECO:0007669"/>
    <property type="project" value="TreeGrafter"/>
</dbReference>
<dbReference type="GO" id="GO:0005524">
    <property type="term" value="F:ATP binding"/>
    <property type="evidence" value="ECO:0007669"/>
    <property type="project" value="UniProtKB-UniRule"/>
</dbReference>
<dbReference type="GO" id="GO:0036430">
    <property type="term" value="F:CMP kinase activity"/>
    <property type="evidence" value="ECO:0007669"/>
    <property type="project" value="RHEA"/>
</dbReference>
<dbReference type="GO" id="GO:0036431">
    <property type="term" value="F:dCMP kinase activity"/>
    <property type="evidence" value="ECO:0007669"/>
    <property type="project" value="RHEA"/>
</dbReference>
<dbReference type="GO" id="GO:0015949">
    <property type="term" value="P:nucleobase-containing small molecule interconversion"/>
    <property type="evidence" value="ECO:0007669"/>
    <property type="project" value="TreeGrafter"/>
</dbReference>
<dbReference type="GO" id="GO:0006220">
    <property type="term" value="P:pyrimidine nucleotide metabolic process"/>
    <property type="evidence" value="ECO:0007669"/>
    <property type="project" value="UniProtKB-UniRule"/>
</dbReference>
<dbReference type="CDD" id="cd02020">
    <property type="entry name" value="CMPK"/>
    <property type="match status" value="1"/>
</dbReference>
<dbReference type="FunFam" id="3.40.50.300:FF:000262">
    <property type="entry name" value="Cytidylate kinase"/>
    <property type="match status" value="1"/>
</dbReference>
<dbReference type="Gene3D" id="3.40.50.300">
    <property type="entry name" value="P-loop containing nucleotide triphosphate hydrolases"/>
    <property type="match status" value="1"/>
</dbReference>
<dbReference type="HAMAP" id="MF_00238">
    <property type="entry name" value="Cytidyl_kinase_type1"/>
    <property type="match status" value="1"/>
</dbReference>
<dbReference type="InterPro" id="IPR003136">
    <property type="entry name" value="Cytidylate_kin"/>
</dbReference>
<dbReference type="InterPro" id="IPR011994">
    <property type="entry name" value="Cytidylate_kinase_dom"/>
</dbReference>
<dbReference type="InterPro" id="IPR027417">
    <property type="entry name" value="P-loop_NTPase"/>
</dbReference>
<dbReference type="NCBIfam" id="TIGR00017">
    <property type="entry name" value="cmk"/>
    <property type="match status" value="1"/>
</dbReference>
<dbReference type="PANTHER" id="PTHR21299:SF2">
    <property type="entry name" value="CYTIDYLATE KINASE"/>
    <property type="match status" value="1"/>
</dbReference>
<dbReference type="PANTHER" id="PTHR21299">
    <property type="entry name" value="CYTIDYLATE KINASE/PANTOATE-BETA-ALANINE LIGASE"/>
    <property type="match status" value="1"/>
</dbReference>
<dbReference type="Pfam" id="PF02224">
    <property type="entry name" value="Cytidylate_kin"/>
    <property type="match status" value="1"/>
</dbReference>
<dbReference type="SUPFAM" id="SSF52540">
    <property type="entry name" value="P-loop containing nucleoside triphosphate hydrolases"/>
    <property type="match status" value="1"/>
</dbReference>
<evidence type="ECO:0000255" key="1">
    <source>
        <dbReference type="HAMAP-Rule" id="MF_00238"/>
    </source>
</evidence>
<proteinExistence type="inferred from homology"/>
<name>KCY_VIBPA</name>
<reference key="1">
    <citation type="journal article" date="2003" name="Lancet">
        <title>Genome sequence of Vibrio parahaemolyticus: a pathogenic mechanism distinct from that of V. cholerae.</title>
        <authorList>
            <person name="Makino K."/>
            <person name="Oshima K."/>
            <person name="Kurokawa K."/>
            <person name="Yokoyama K."/>
            <person name="Uda T."/>
            <person name="Tagomori K."/>
            <person name="Iijima Y."/>
            <person name="Najima M."/>
            <person name="Nakano M."/>
            <person name="Yamashita A."/>
            <person name="Kubota Y."/>
            <person name="Kimura S."/>
            <person name="Yasunaga T."/>
            <person name="Honda T."/>
            <person name="Shinagawa H."/>
            <person name="Hattori M."/>
            <person name="Iida T."/>
        </authorList>
    </citation>
    <scope>NUCLEOTIDE SEQUENCE [LARGE SCALE GENOMIC DNA]</scope>
    <source>
        <strain>RIMD 2210633</strain>
    </source>
</reference>
<comment type="catalytic activity">
    <reaction evidence="1">
        <text>CMP + ATP = CDP + ADP</text>
        <dbReference type="Rhea" id="RHEA:11600"/>
        <dbReference type="ChEBI" id="CHEBI:30616"/>
        <dbReference type="ChEBI" id="CHEBI:58069"/>
        <dbReference type="ChEBI" id="CHEBI:60377"/>
        <dbReference type="ChEBI" id="CHEBI:456216"/>
        <dbReference type="EC" id="2.7.4.25"/>
    </reaction>
</comment>
<comment type="catalytic activity">
    <reaction evidence="1">
        <text>dCMP + ATP = dCDP + ADP</text>
        <dbReference type="Rhea" id="RHEA:25094"/>
        <dbReference type="ChEBI" id="CHEBI:30616"/>
        <dbReference type="ChEBI" id="CHEBI:57566"/>
        <dbReference type="ChEBI" id="CHEBI:58593"/>
        <dbReference type="ChEBI" id="CHEBI:456216"/>
        <dbReference type="EC" id="2.7.4.25"/>
    </reaction>
</comment>
<comment type="subcellular location">
    <subcellularLocation>
        <location evidence="1">Cytoplasm</location>
    </subcellularLocation>
</comment>
<comment type="similarity">
    <text evidence="1">Belongs to the cytidylate kinase family. Type 1 subfamily.</text>
</comment>
<organism>
    <name type="scientific">Vibrio parahaemolyticus serotype O3:K6 (strain RIMD 2210633)</name>
    <dbReference type="NCBI Taxonomy" id="223926"/>
    <lineage>
        <taxon>Bacteria</taxon>
        <taxon>Pseudomonadati</taxon>
        <taxon>Pseudomonadota</taxon>
        <taxon>Gammaproteobacteria</taxon>
        <taxon>Vibrionales</taxon>
        <taxon>Vibrionaceae</taxon>
        <taxon>Vibrio</taxon>
    </lineage>
</organism>
<gene>
    <name evidence="1" type="primary">cmk</name>
    <name type="ordered locus">VP2031</name>
</gene>
<keyword id="KW-0067">ATP-binding</keyword>
<keyword id="KW-0963">Cytoplasm</keyword>
<keyword id="KW-0418">Kinase</keyword>
<keyword id="KW-0547">Nucleotide-binding</keyword>
<keyword id="KW-0808">Transferase</keyword>